<reference key="1">
    <citation type="journal article" date="2000" name="Nucleic Acids Res.">
        <title>Complete genome sequence of the alkaliphilic bacterium Bacillus halodurans and genomic sequence comparison with Bacillus subtilis.</title>
        <authorList>
            <person name="Takami H."/>
            <person name="Nakasone K."/>
            <person name="Takaki Y."/>
            <person name="Maeno G."/>
            <person name="Sasaki R."/>
            <person name="Masui N."/>
            <person name="Fuji F."/>
            <person name="Hirama C."/>
            <person name="Nakamura Y."/>
            <person name="Ogasawara N."/>
            <person name="Kuhara S."/>
            <person name="Horikoshi K."/>
        </authorList>
    </citation>
    <scope>NUCLEOTIDE SEQUENCE [LARGE SCALE GENOMIC DNA]</scope>
    <source>
        <strain>ATCC BAA-125 / DSM 18197 / FERM 7344 / JCM 9153 / C-125</strain>
    </source>
</reference>
<proteinExistence type="inferred from homology"/>
<organism>
    <name type="scientific">Halalkalibacterium halodurans (strain ATCC BAA-125 / DSM 18197 / FERM 7344 / JCM 9153 / C-125)</name>
    <name type="common">Bacillus halodurans</name>
    <dbReference type="NCBI Taxonomy" id="272558"/>
    <lineage>
        <taxon>Bacteria</taxon>
        <taxon>Bacillati</taxon>
        <taxon>Bacillota</taxon>
        <taxon>Bacilli</taxon>
        <taxon>Bacillales</taxon>
        <taxon>Bacillaceae</taxon>
        <taxon>Halalkalibacterium (ex Joshi et al. 2022)</taxon>
    </lineage>
</organism>
<feature type="chain" id="PRO_0000183199" description="UDP-glucose 4-epimerase">
    <location>
        <begin position="1"/>
        <end position="334"/>
    </location>
</feature>
<feature type="active site" description="Proton acceptor" evidence="1">
    <location>
        <position position="140"/>
    </location>
</feature>
<feature type="binding site" evidence="1">
    <location>
        <begin position="11"/>
        <end position="12"/>
    </location>
    <ligand>
        <name>NAD(+)</name>
        <dbReference type="ChEBI" id="CHEBI:57540"/>
    </ligand>
</feature>
<feature type="binding site" evidence="1">
    <location>
        <begin position="31"/>
        <end position="36"/>
    </location>
    <ligand>
        <name>NAD(+)</name>
        <dbReference type="ChEBI" id="CHEBI:57540"/>
    </ligand>
</feature>
<feature type="binding site" evidence="1">
    <location>
        <begin position="50"/>
        <end position="51"/>
    </location>
    <ligand>
        <name>NAD(+)</name>
        <dbReference type="ChEBI" id="CHEBI:57540"/>
    </ligand>
</feature>
<feature type="binding site" evidence="1">
    <location>
        <begin position="72"/>
        <end position="76"/>
    </location>
    <ligand>
        <name>NAD(+)</name>
        <dbReference type="ChEBI" id="CHEBI:57540"/>
    </ligand>
</feature>
<feature type="binding site" evidence="1">
    <location>
        <position position="91"/>
    </location>
    <ligand>
        <name>NAD(+)</name>
        <dbReference type="ChEBI" id="CHEBI:57540"/>
    </ligand>
</feature>
<feature type="binding site" evidence="1">
    <location>
        <position position="116"/>
    </location>
    <ligand>
        <name>NAD(+)</name>
        <dbReference type="ChEBI" id="CHEBI:57540"/>
    </ligand>
</feature>
<feature type="binding site" evidence="1">
    <location>
        <position position="116"/>
    </location>
    <ligand>
        <name>substrate</name>
    </ligand>
</feature>
<feature type="binding site" evidence="1">
    <location>
        <position position="140"/>
    </location>
    <ligand>
        <name>NAD(+)</name>
        <dbReference type="ChEBI" id="CHEBI:57540"/>
    </ligand>
</feature>
<feature type="binding site" evidence="1">
    <location>
        <position position="140"/>
    </location>
    <ligand>
        <name>substrate</name>
    </ligand>
</feature>
<feature type="binding site" evidence="1">
    <location>
        <position position="144"/>
    </location>
    <ligand>
        <name>NAD(+)</name>
        <dbReference type="ChEBI" id="CHEBI:57540"/>
    </ligand>
</feature>
<feature type="binding site" evidence="1">
    <location>
        <position position="168"/>
    </location>
    <ligand>
        <name>NAD(+)</name>
        <dbReference type="ChEBI" id="CHEBI:57540"/>
    </ligand>
</feature>
<feature type="binding site" evidence="1">
    <location>
        <position position="169"/>
    </location>
    <ligand>
        <name>substrate</name>
    </ligand>
</feature>
<feature type="binding site" evidence="1">
    <location>
        <begin position="188"/>
        <end position="189"/>
    </location>
    <ligand>
        <name>substrate</name>
    </ligand>
</feature>
<feature type="binding site" evidence="1">
    <location>
        <begin position="205"/>
        <end position="207"/>
    </location>
    <ligand>
        <name>substrate</name>
    </ligand>
</feature>
<feature type="binding site" evidence="1">
    <location>
        <position position="220"/>
    </location>
    <ligand>
        <name>substrate</name>
    </ligand>
</feature>
<feature type="binding site" evidence="1">
    <location>
        <begin position="281"/>
        <end position="284"/>
    </location>
    <ligand>
        <name>substrate</name>
    </ligand>
</feature>
<name>GALE_HALH5</name>
<dbReference type="EC" id="5.1.3.2"/>
<dbReference type="EMBL" id="BA000004">
    <property type="protein sequence ID" value="BAB04827.1"/>
    <property type="molecule type" value="Genomic_DNA"/>
</dbReference>
<dbReference type="PIR" id="D83788">
    <property type="entry name" value="D83788"/>
</dbReference>
<dbReference type="RefSeq" id="WP_010897278.1">
    <property type="nucleotide sequence ID" value="NC_002570.2"/>
</dbReference>
<dbReference type="SMR" id="Q9KDV3"/>
<dbReference type="STRING" id="272558.gene:10727002"/>
<dbReference type="KEGG" id="bha:BH1108"/>
<dbReference type="eggNOG" id="COG1087">
    <property type="taxonomic scope" value="Bacteria"/>
</dbReference>
<dbReference type="HOGENOM" id="CLU_007383_1_10_9"/>
<dbReference type="OrthoDB" id="9801785at2"/>
<dbReference type="UniPathway" id="UPA00214"/>
<dbReference type="Proteomes" id="UP000001258">
    <property type="component" value="Chromosome"/>
</dbReference>
<dbReference type="GO" id="GO:0003978">
    <property type="term" value="F:UDP-glucose 4-epimerase activity"/>
    <property type="evidence" value="ECO:0007669"/>
    <property type="project" value="UniProtKB-EC"/>
</dbReference>
<dbReference type="GO" id="GO:0033499">
    <property type="term" value="P:galactose catabolic process via UDP-galactose, Leloir pathway"/>
    <property type="evidence" value="ECO:0007669"/>
    <property type="project" value="TreeGrafter"/>
</dbReference>
<dbReference type="CDD" id="cd05247">
    <property type="entry name" value="UDP_G4E_1_SDR_e"/>
    <property type="match status" value="1"/>
</dbReference>
<dbReference type="Gene3D" id="3.40.50.720">
    <property type="entry name" value="NAD(P)-binding Rossmann-like Domain"/>
    <property type="match status" value="1"/>
</dbReference>
<dbReference type="Gene3D" id="3.90.25.10">
    <property type="entry name" value="UDP-galactose 4-epimerase, domain 1"/>
    <property type="match status" value="1"/>
</dbReference>
<dbReference type="InterPro" id="IPR001509">
    <property type="entry name" value="Epimerase_deHydtase"/>
</dbReference>
<dbReference type="InterPro" id="IPR036291">
    <property type="entry name" value="NAD(P)-bd_dom_sf"/>
</dbReference>
<dbReference type="InterPro" id="IPR005886">
    <property type="entry name" value="UDP_G4E"/>
</dbReference>
<dbReference type="NCBIfam" id="TIGR01179">
    <property type="entry name" value="galE"/>
    <property type="match status" value="1"/>
</dbReference>
<dbReference type="PANTHER" id="PTHR43725:SF53">
    <property type="entry name" value="UDP-ARABINOSE 4-EPIMERASE 1"/>
    <property type="match status" value="1"/>
</dbReference>
<dbReference type="PANTHER" id="PTHR43725">
    <property type="entry name" value="UDP-GLUCOSE 4-EPIMERASE"/>
    <property type="match status" value="1"/>
</dbReference>
<dbReference type="Pfam" id="PF01370">
    <property type="entry name" value="Epimerase"/>
    <property type="match status" value="1"/>
</dbReference>
<dbReference type="SUPFAM" id="SSF51735">
    <property type="entry name" value="NAD(P)-binding Rossmann-fold domains"/>
    <property type="match status" value="1"/>
</dbReference>
<accession>Q9KDV3</accession>
<evidence type="ECO:0000250" key="1"/>
<evidence type="ECO:0000305" key="2"/>
<sequence>MAILVTGGAGYIGSHTVLFLLEQGEQVIVLDNLQKGHAGALSDVTFYHGDIRDDQLLDTIFTTHSIDTVIHFAANSLVGESVKQPIEYYENNVIGTHTLLKKMLEHDVKKIVFSSTAATYGEPVQIPIQESDPTIPTNPYGETKLAIEKMFHWCQEAYGLQYVCLRYFNAAGADPNGRIGEDHSPESHLIPIVLQVALGQRERVAIFGDDYQTEDGSCIRDYIHVMDLANAHYLACEHLRKDGQSGSFNLGNGKGFSVKEVIEVCRQVTGHPIPAEIAPRRSGDPASLIASSEKAQTILGWEPKYPSLETMVEHAWNWHKEHPHGYSTENKDKQ</sequence>
<comment type="function">
    <text evidence="1">Involved in the metabolism of galactose. Catalyzes the conversion of UDP-galactose (UDP-Gal) to UDP-glucose (UDP-Glc) through a mechanism involving the transient reduction of NAD (By similarity).</text>
</comment>
<comment type="catalytic activity">
    <reaction>
        <text>UDP-alpha-D-glucose = UDP-alpha-D-galactose</text>
        <dbReference type="Rhea" id="RHEA:22168"/>
        <dbReference type="ChEBI" id="CHEBI:58885"/>
        <dbReference type="ChEBI" id="CHEBI:66914"/>
        <dbReference type="EC" id="5.1.3.2"/>
    </reaction>
</comment>
<comment type="cofactor">
    <cofactor evidence="1">
        <name>NAD(+)</name>
        <dbReference type="ChEBI" id="CHEBI:57540"/>
    </cofactor>
</comment>
<comment type="pathway">
    <text>Carbohydrate metabolism; galactose metabolism.</text>
</comment>
<comment type="subunit">
    <text evidence="1">Homodimer.</text>
</comment>
<comment type="similarity">
    <text evidence="2">Belongs to the NAD(P)-dependent epimerase/dehydratase family.</text>
</comment>
<gene>
    <name type="primary">galE</name>
    <name type="ordered locus">BH1108</name>
</gene>
<keyword id="KW-0119">Carbohydrate metabolism</keyword>
<keyword id="KW-0299">Galactose metabolism</keyword>
<keyword id="KW-0413">Isomerase</keyword>
<keyword id="KW-0520">NAD</keyword>
<keyword id="KW-1185">Reference proteome</keyword>
<protein>
    <recommendedName>
        <fullName>UDP-glucose 4-epimerase</fullName>
        <ecNumber>5.1.3.2</ecNumber>
    </recommendedName>
    <alternativeName>
        <fullName>Galactowaldenase</fullName>
    </alternativeName>
    <alternativeName>
        <fullName>UDP-galactose 4-epimerase</fullName>
    </alternativeName>
</protein>